<comment type="function">
    <text evidence="1">Binds to 23S rRNA. Forms part of two intersubunit bridges in the 70S ribosome.</text>
</comment>
<comment type="subunit">
    <text evidence="1">Part of the 50S ribosomal subunit. Forms a cluster with proteins L3 and L19. In the 70S ribosome, L14 and L19 interact and together make contacts with the 16S rRNA in bridges B5 and B8.</text>
</comment>
<comment type="similarity">
    <text evidence="1">Belongs to the universal ribosomal protein uL14 family.</text>
</comment>
<proteinExistence type="inferred from homology"/>
<protein>
    <recommendedName>
        <fullName evidence="1">Large ribosomal subunit protein uL14</fullName>
    </recommendedName>
    <alternativeName>
        <fullName evidence="2">50S ribosomal protein L14</fullName>
    </alternativeName>
</protein>
<dbReference type="EMBL" id="CP000153">
    <property type="protein sequence ID" value="ABB43577.1"/>
    <property type="molecule type" value="Genomic_DNA"/>
</dbReference>
<dbReference type="RefSeq" id="WP_011371932.1">
    <property type="nucleotide sequence ID" value="NC_007575.1"/>
</dbReference>
<dbReference type="SMR" id="Q30TV4"/>
<dbReference type="STRING" id="326298.Suden_0296"/>
<dbReference type="KEGG" id="tdn:Suden_0296"/>
<dbReference type="eggNOG" id="COG0093">
    <property type="taxonomic scope" value="Bacteria"/>
</dbReference>
<dbReference type="HOGENOM" id="CLU_095071_2_1_7"/>
<dbReference type="OrthoDB" id="9806379at2"/>
<dbReference type="Proteomes" id="UP000002714">
    <property type="component" value="Chromosome"/>
</dbReference>
<dbReference type="GO" id="GO:0022625">
    <property type="term" value="C:cytosolic large ribosomal subunit"/>
    <property type="evidence" value="ECO:0007669"/>
    <property type="project" value="TreeGrafter"/>
</dbReference>
<dbReference type="GO" id="GO:0070180">
    <property type="term" value="F:large ribosomal subunit rRNA binding"/>
    <property type="evidence" value="ECO:0007669"/>
    <property type="project" value="TreeGrafter"/>
</dbReference>
<dbReference type="GO" id="GO:0003735">
    <property type="term" value="F:structural constituent of ribosome"/>
    <property type="evidence" value="ECO:0007669"/>
    <property type="project" value="InterPro"/>
</dbReference>
<dbReference type="GO" id="GO:0006412">
    <property type="term" value="P:translation"/>
    <property type="evidence" value="ECO:0007669"/>
    <property type="project" value="UniProtKB-UniRule"/>
</dbReference>
<dbReference type="CDD" id="cd00337">
    <property type="entry name" value="Ribosomal_uL14"/>
    <property type="match status" value="1"/>
</dbReference>
<dbReference type="FunFam" id="2.40.150.20:FF:000001">
    <property type="entry name" value="50S ribosomal protein L14"/>
    <property type="match status" value="1"/>
</dbReference>
<dbReference type="Gene3D" id="2.40.150.20">
    <property type="entry name" value="Ribosomal protein L14"/>
    <property type="match status" value="1"/>
</dbReference>
<dbReference type="HAMAP" id="MF_01367">
    <property type="entry name" value="Ribosomal_uL14"/>
    <property type="match status" value="1"/>
</dbReference>
<dbReference type="InterPro" id="IPR000218">
    <property type="entry name" value="Ribosomal_uL14"/>
</dbReference>
<dbReference type="InterPro" id="IPR005745">
    <property type="entry name" value="Ribosomal_uL14_bac-type"/>
</dbReference>
<dbReference type="InterPro" id="IPR019972">
    <property type="entry name" value="Ribosomal_uL14_CS"/>
</dbReference>
<dbReference type="InterPro" id="IPR036853">
    <property type="entry name" value="Ribosomal_uL14_sf"/>
</dbReference>
<dbReference type="NCBIfam" id="TIGR01067">
    <property type="entry name" value="rplN_bact"/>
    <property type="match status" value="1"/>
</dbReference>
<dbReference type="PANTHER" id="PTHR11761">
    <property type="entry name" value="50S/60S RIBOSOMAL PROTEIN L14/L23"/>
    <property type="match status" value="1"/>
</dbReference>
<dbReference type="PANTHER" id="PTHR11761:SF3">
    <property type="entry name" value="LARGE RIBOSOMAL SUBUNIT PROTEIN UL14M"/>
    <property type="match status" value="1"/>
</dbReference>
<dbReference type="Pfam" id="PF00238">
    <property type="entry name" value="Ribosomal_L14"/>
    <property type="match status" value="1"/>
</dbReference>
<dbReference type="SMART" id="SM01374">
    <property type="entry name" value="Ribosomal_L14"/>
    <property type="match status" value="1"/>
</dbReference>
<dbReference type="SUPFAM" id="SSF50193">
    <property type="entry name" value="Ribosomal protein L14"/>
    <property type="match status" value="1"/>
</dbReference>
<dbReference type="PROSITE" id="PS00049">
    <property type="entry name" value="RIBOSOMAL_L14"/>
    <property type="match status" value="1"/>
</dbReference>
<gene>
    <name evidence="1" type="primary">rplN</name>
    <name type="ordered locus">Suden_0296</name>
</gene>
<sequence>MIQAFTRLNVADNTGAKEVMCIKVLGGSKRRYAQVGDVIIASVKKATPTAKVKKGKVVKAVIVRTAKEIHRENGSLIRFDDNAAVILDDKREPIGTRIFGPIAREVRYSGFMKIVSLAPEVV</sequence>
<organism>
    <name type="scientific">Sulfurimonas denitrificans (strain ATCC 33889 / DSM 1251)</name>
    <name type="common">Thiomicrospira denitrificans (strain ATCC 33889 / DSM 1251)</name>
    <dbReference type="NCBI Taxonomy" id="326298"/>
    <lineage>
        <taxon>Bacteria</taxon>
        <taxon>Pseudomonadati</taxon>
        <taxon>Campylobacterota</taxon>
        <taxon>Epsilonproteobacteria</taxon>
        <taxon>Campylobacterales</taxon>
        <taxon>Sulfurimonadaceae</taxon>
        <taxon>Sulfurimonas</taxon>
    </lineage>
</organism>
<reference key="1">
    <citation type="journal article" date="2008" name="Appl. Environ. Microbiol.">
        <title>Genome of the epsilonproteobacterial chemolithoautotroph Sulfurimonas denitrificans.</title>
        <authorList>
            <person name="Sievert S.M."/>
            <person name="Scott K.M."/>
            <person name="Klotz M.G."/>
            <person name="Chain P.S.G."/>
            <person name="Hauser L.J."/>
            <person name="Hemp J."/>
            <person name="Huegler M."/>
            <person name="Land M."/>
            <person name="Lapidus A."/>
            <person name="Larimer F.W."/>
            <person name="Lucas S."/>
            <person name="Malfatti S.A."/>
            <person name="Meyer F."/>
            <person name="Paulsen I.T."/>
            <person name="Ren Q."/>
            <person name="Simon J."/>
            <person name="Bailey K."/>
            <person name="Diaz E."/>
            <person name="Fitzpatrick K.A."/>
            <person name="Glover B."/>
            <person name="Gwatney N."/>
            <person name="Korajkic A."/>
            <person name="Long A."/>
            <person name="Mobberley J.M."/>
            <person name="Pantry S.N."/>
            <person name="Pazder G."/>
            <person name="Peterson S."/>
            <person name="Quintanilla J.D."/>
            <person name="Sprinkle R."/>
            <person name="Stephens J."/>
            <person name="Thomas P."/>
            <person name="Vaughn R."/>
            <person name="Weber M.J."/>
            <person name="Wooten L.L."/>
        </authorList>
    </citation>
    <scope>NUCLEOTIDE SEQUENCE [LARGE SCALE GENOMIC DNA]</scope>
    <source>
        <strain>ATCC 33889 / DSM 1251</strain>
    </source>
</reference>
<keyword id="KW-1185">Reference proteome</keyword>
<keyword id="KW-0687">Ribonucleoprotein</keyword>
<keyword id="KW-0689">Ribosomal protein</keyword>
<keyword id="KW-0694">RNA-binding</keyword>
<keyword id="KW-0699">rRNA-binding</keyword>
<evidence type="ECO:0000255" key="1">
    <source>
        <dbReference type="HAMAP-Rule" id="MF_01367"/>
    </source>
</evidence>
<evidence type="ECO:0000305" key="2"/>
<feature type="chain" id="PRO_0000266577" description="Large ribosomal subunit protein uL14">
    <location>
        <begin position="1"/>
        <end position="122"/>
    </location>
</feature>
<name>RL14_SULDN</name>
<accession>Q30TV4</accession>